<keyword id="KW-0963">Cytoplasm</keyword>
<keyword id="KW-0378">Hydrolase</keyword>
<keyword id="KW-1185">Reference proteome</keyword>
<keyword id="KW-0694">RNA-binding</keyword>
<keyword id="KW-0820">tRNA-binding</keyword>
<gene>
    <name evidence="1" type="primary">pth</name>
    <name type="ordered locus">BMA3122</name>
</gene>
<feature type="chain" id="PRO_0000187710" description="Peptidyl-tRNA hydrolase">
    <location>
        <begin position="1"/>
        <end position="201"/>
    </location>
</feature>
<feature type="active site" description="Proton acceptor" evidence="1">
    <location>
        <position position="20"/>
    </location>
</feature>
<feature type="binding site" evidence="1">
    <location>
        <position position="15"/>
    </location>
    <ligand>
        <name>tRNA</name>
        <dbReference type="ChEBI" id="CHEBI:17843"/>
    </ligand>
</feature>
<feature type="binding site" evidence="1">
    <location>
        <position position="66"/>
    </location>
    <ligand>
        <name>tRNA</name>
        <dbReference type="ChEBI" id="CHEBI:17843"/>
    </ligand>
</feature>
<feature type="binding site" evidence="1">
    <location>
        <position position="68"/>
    </location>
    <ligand>
        <name>tRNA</name>
        <dbReference type="ChEBI" id="CHEBI:17843"/>
    </ligand>
</feature>
<feature type="binding site" evidence="1">
    <location>
        <position position="114"/>
    </location>
    <ligand>
        <name>tRNA</name>
        <dbReference type="ChEBI" id="CHEBI:17843"/>
    </ligand>
</feature>
<feature type="site" description="Discriminates between blocked and unblocked aminoacyl-tRNA" evidence="1">
    <location>
        <position position="10"/>
    </location>
</feature>
<feature type="site" description="Stabilizes the basic form of H active site to accept a proton" evidence="1">
    <location>
        <position position="93"/>
    </location>
</feature>
<proteinExistence type="inferred from homology"/>
<organism>
    <name type="scientific">Burkholderia mallei (strain ATCC 23344)</name>
    <dbReference type="NCBI Taxonomy" id="243160"/>
    <lineage>
        <taxon>Bacteria</taxon>
        <taxon>Pseudomonadati</taxon>
        <taxon>Pseudomonadota</taxon>
        <taxon>Betaproteobacteria</taxon>
        <taxon>Burkholderiales</taxon>
        <taxon>Burkholderiaceae</taxon>
        <taxon>Burkholderia</taxon>
        <taxon>pseudomallei group</taxon>
    </lineage>
</organism>
<accession>Q62FC1</accession>
<protein>
    <recommendedName>
        <fullName evidence="1">Peptidyl-tRNA hydrolase</fullName>
        <shortName evidence="1">Pth</shortName>
        <ecNumber evidence="1">3.1.1.29</ecNumber>
    </recommendedName>
</protein>
<name>PTH_BURMA</name>
<evidence type="ECO:0000255" key="1">
    <source>
        <dbReference type="HAMAP-Rule" id="MF_00083"/>
    </source>
</evidence>
<reference key="1">
    <citation type="journal article" date="2004" name="Proc. Natl. Acad. Sci. U.S.A.">
        <title>Structural flexibility in the Burkholderia mallei genome.</title>
        <authorList>
            <person name="Nierman W.C."/>
            <person name="DeShazer D."/>
            <person name="Kim H.S."/>
            <person name="Tettelin H."/>
            <person name="Nelson K.E."/>
            <person name="Feldblyum T.V."/>
            <person name="Ulrich R.L."/>
            <person name="Ronning C.M."/>
            <person name="Brinkac L.M."/>
            <person name="Daugherty S.C."/>
            <person name="Davidsen T.D."/>
            <person name="DeBoy R.T."/>
            <person name="Dimitrov G."/>
            <person name="Dodson R.J."/>
            <person name="Durkin A.S."/>
            <person name="Gwinn M.L."/>
            <person name="Haft D.H."/>
            <person name="Khouri H.M."/>
            <person name="Kolonay J.F."/>
            <person name="Madupu R."/>
            <person name="Mohammoud Y."/>
            <person name="Nelson W.C."/>
            <person name="Radune D."/>
            <person name="Romero C.M."/>
            <person name="Sarria S."/>
            <person name="Selengut J."/>
            <person name="Shamblin C."/>
            <person name="Sullivan S.A."/>
            <person name="White O."/>
            <person name="Yu Y."/>
            <person name="Zafar N."/>
            <person name="Zhou L."/>
            <person name="Fraser C.M."/>
        </authorList>
    </citation>
    <scope>NUCLEOTIDE SEQUENCE [LARGE SCALE GENOMIC DNA]</scope>
    <source>
        <strain>ATCC 23344</strain>
    </source>
</reference>
<sequence length="201" mass="22056">MIKLIVGLGNPGAEYTATRHNAGFWLVDQLAREAGATLRDERRFHGFYAKARLFGEEVHLLEPQTYMNRSGQAVVALAHFFKILPTEILVAHDELDLPPGAAKLKLGSGSGGHNGLKDISAHLSSQQYWRLRIGIGHPRDLIPESARAGAKPDVANFVLKPPRKDEQDLIDAAIERALAVMPTAIKGETERAMMQLHRNGA</sequence>
<dbReference type="EC" id="3.1.1.29" evidence="1"/>
<dbReference type="EMBL" id="CP000010">
    <property type="protein sequence ID" value="AAU48102.1"/>
    <property type="molecule type" value="Genomic_DNA"/>
</dbReference>
<dbReference type="RefSeq" id="WP_004185241.1">
    <property type="nucleotide sequence ID" value="NC_006348.1"/>
</dbReference>
<dbReference type="RefSeq" id="YP_104606.1">
    <property type="nucleotide sequence ID" value="NC_006348.1"/>
</dbReference>
<dbReference type="SMR" id="Q62FC1"/>
<dbReference type="GeneID" id="92980788"/>
<dbReference type="KEGG" id="bma:BMA3122"/>
<dbReference type="PATRIC" id="fig|243160.12.peg.3198"/>
<dbReference type="eggNOG" id="COG0193">
    <property type="taxonomic scope" value="Bacteria"/>
</dbReference>
<dbReference type="HOGENOM" id="CLU_062456_3_1_4"/>
<dbReference type="Proteomes" id="UP000006693">
    <property type="component" value="Chromosome 1"/>
</dbReference>
<dbReference type="GO" id="GO:0005737">
    <property type="term" value="C:cytoplasm"/>
    <property type="evidence" value="ECO:0007669"/>
    <property type="project" value="UniProtKB-SubCell"/>
</dbReference>
<dbReference type="GO" id="GO:0004045">
    <property type="term" value="F:peptidyl-tRNA hydrolase activity"/>
    <property type="evidence" value="ECO:0007669"/>
    <property type="project" value="UniProtKB-UniRule"/>
</dbReference>
<dbReference type="GO" id="GO:0000049">
    <property type="term" value="F:tRNA binding"/>
    <property type="evidence" value="ECO:0007669"/>
    <property type="project" value="UniProtKB-UniRule"/>
</dbReference>
<dbReference type="GO" id="GO:0006515">
    <property type="term" value="P:protein quality control for misfolded or incompletely synthesized proteins"/>
    <property type="evidence" value="ECO:0007669"/>
    <property type="project" value="UniProtKB-UniRule"/>
</dbReference>
<dbReference type="GO" id="GO:0072344">
    <property type="term" value="P:rescue of stalled ribosome"/>
    <property type="evidence" value="ECO:0007669"/>
    <property type="project" value="UniProtKB-UniRule"/>
</dbReference>
<dbReference type="CDD" id="cd00462">
    <property type="entry name" value="PTH"/>
    <property type="match status" value="1"/>
</dbReference>
<dbReference type="FunFam" id="3.40.50.1470:FF:000001">
    <property type="entry name" value="Peptidyl-tRNA hydrolase"/>
    <property type="match status" value="1"/>
</dbReference>
<dbReference type="Gene3D" id="3.40.50.1470">
    <property type="entry name" value="Peptidyl-tRNA hydrolase"/>
    <property type="match status" value="1"/>
</dbReference>
<dbReference type="HAMAP" id="MF_00083">
    <property type="entry name" value="Pept_tRNA_hydro_bact"/>
    <property type="match status" value="1"/>
</dbReference>
<dbReference type="InterPro" id="IPR001328">
    <property type="entry name" value="Pept_tRNA_hydro"/>
</dbReference>
<dbReference type="InterPro" id="IPR018171">
    <property type="entry name" value="Pept_tRNA_hydro_CS"/>
</dbReference>
<dbReference type="InterPro" id="IPR036416">
    <property type="entry name" value="Pept_tRNA_hydro_sf"/>
</dbReference>
<dbReference type="NCBIfam" id="TIGR00447">
    <property type="entry name" value="pth"/>
    <property type="match status" value="1"/>
</dbReference>
<dbReference type="PANTHER" id="PTHR17224">
    <property type="entry name" value="PEPTIDYL-TRNA HYDROLASE"/>
    <property type="match status" value="1"/>
</dbReference>
<dbReference type="PANTHER" id="PTHR17224:SF1">
    <property type="entry name" value="PEPTIDYL-TRNA HYDROLASE"/>
    <property type="match status" value="1"/>
</dbReference>
<dbReference type="Pfam" id="PF01195">
    <property type="entry name" value="Pept_tRNA_hydro"/>
    <property type="match status" value="1"/>
</dbReference>
<dbReference type="SUPFAM" id="SSF53178">
    <property type="entry name" value="Peptidyl-tRNA hydrolase-like"/>
    <property type="match status" value="1"/>
</dbReference>
<dbReference type="PROSITE" id="PS01195">
    <property type="entry name" value="PEPT_TRNA_HYDROL_1"/>
    <property type="match status" value="1"/>
</dbReference>
<dbReference type="PROSITE" id="PS01196">
    <property type="entry name" value="PEPT_TRNA_HYDROL_2"/>
    <property type="match status" value="1"/>
</dbReference>
<comment type="function">
    <text evidence="1">Hydrolyzes ribosome-free peptidyl-tRNAs (with 1 or more amino acids incorporated), which drop off the ribosome during protein synthesis, or as a result of ribosome stalling.</text>
</comment>
<comment type="function">
    <text evidence="1">Catalyzes the release of premature peptidyl moieties from peptidyl-tRNA molecules trapped in stalled 50S ribosomal subunits, and thus maintains levels of free tRNAs and 50S ribosomes.</text>
</comment>
<comment type="catalytic activity">
    <reaction evidence="1">
        <text>an N-acyl-L-alpha-aminoacyl-tRNA + H2O = an N-acyl-L-amino acid + a tRNA + H(+)</text>
        <dbReference type="Rhea" id="RHEA:54448"/>
        <dbReference type="Rhea" id="RHEA-COMP:10123"/>
        <dbReference type="Rhea" id="RHEA-COMP:13883"/>
        <dbReference type="ChEBI" id="CHEBI:15377"/>
        <dbReference type="ChEBI" id="CHEBI:15378"/>
        <dbReference type="ChEBI" id="CHEBI:59874"/>
        <dbReference type="ChEBI" id="CHEBI:78442"/>
        <dbReference type="ChEBI" id="CHEBI:138191"/>
        <dbReference type="EC" id="3.1.1.29"/>
    </reaction>
</comment>
<comment type="subunit">
    <text evidence="1">Monomer.</text>
</comment>
<comment type="subcellular location">
    <subcellularLocation>
        <location evidence="1">Cytoplasm</location>
    </subcellularLocation>
</comment>
<comment type="similarity">
    <text evidence="1">Belongs to the PTH family.</text>
</comment>